<name>Y2079_RHIJ3</name>
<comment type="similarity">
    <text evidence="1">Belongs to the UPF0386 family.</text>
</comment>
<sequence length="85" mass="9985">MDISRTEQRILHLMAQGGRIEITRDDDRKIEAVSCFTRDGWLYPGVDLDLFRRLKRLRAIKSSGGQPYRITERGLRLVRSQLNNR</sequence>
<organism>
    <name type="scientific">Rhizobium johnstonii (strain DSM 114642 / LMG 32736 / 3841)</name>
    <name type="common">Rhizobium leguminosarum bv. viciae</name>
    <dbReference type="NCBI Taxonomy" id="216596"/>
    <lineage>
        <taxon>Bacteria</taxon>
        <taxon>Pseudomonadati</taxon>
        <taxon>Pseudomonadota</taxon>
        <taxon>Alphaproteobacteria</taxon>
        <taxon>Hyphomicrobiales</taxon>
        <taxon>Rhizobiaceae</taxon>
        <taxon>Rhizobium/Agrobacterium group</taxon>
        <taxon>Rhizobium</taxon>
        <taxon>Rhizobium johnstonii</taxon>
    </lineage>
</organism>
<feature type="chain" id="PRO_0000252183" description="UPF0386 protein RL2079">
    <location>
        <begin position="1"/>
        <end position="85"/>
    </location>
</feature>
<protein>
    <recommendedName>
        <fullName evidence="1">UPF0386 protein RL2079</fullName>
    </recommendedName>
</protein>
<evidence type="ECO:0000255" key="1">
    <source>
        <dbReference type="HAMAP-Rule" id="MF_00827"/>
    </source>
</evidence>
<proteinExistence type="inferred from homology"/>
<reference key="1">
    <citation type="journal article" date="2006" name="Genome Biol.">
        <title>The genome of Rhizobium leguminosarum has recognizable core and accessory components.</title>
        <authorList>
            <person name="Young J.P.W."/>
            <person name="Crossman L.C."/>
            <person name="Johnston A.W.B."/>
            <person name="Thomson N.R."/>
            <person name="Ghazoui Z.F."/>
            <person name="Hull K.H."/>
            <person name="Wexler M."/>
            <person name="Curson A.R.J."/>
            <person name="Todd J.D."/>
            <person name="Poole P.S."/>
            <person name="Mauchline T.H."/>
            <person name="East A.K."/>
            <person name="Quail M.A."/>
            <person name="Churcher C."/>
            <person name="Arrowsmith C."/>
            <person name="Cherevach I."/>
            <person name="Chillingworth T."/>
            <person name="Clarke K."/>
            <person name="Cronin A."/>
            <person name="Davis P."/>
            <person name="Fraser A."/>
            <person name="Hance Z."/>
            <person name="Hauser H."/>
            <person name="Jagels K."/>
            <person name="Moule S."/>
            <person name="Mungall K."/>
            <person name="Norbertczak H."/>
            <person name="Rabbinowitsch E."/>
            <person name="Sanders M."/>
            <person name="Simmonds M."/>
            <person name="Whitehead S."/>
            <person name="Parkhill J."/>
        </authorList>
    </citation>
    <scope>NUCLEOTIDE SEQUENCE [LARGE SCALE GENOMIC DNA]</scope>
    <source>
        <strain>DSM 114642 / LMG 32736 / 3841</strain>
    </source>
</reference>
<gene>
    <name type="ordered locus">RL2079</name>
</gene>
<accession>Q1MHJ2</accession>
<dbReference type="EMBL" id="AM236080">
    <property type="protein sequence ID" value="CAK07571.1"/>
    <property type="molecule type" value="Genomic_DNA"/>
</dbReference>
<dbReference type="RefSeq" id="WP_011651684.1">
    <property type="nucleotide sequence ID" value="NC_008380.1"/>
</dbReference>
<dbReference type="SMR" id="Q1MHJ2"/>
<dbReference type="EnsemblBacteria" id="CAK07571">
    <property type="protein sequence ID" value="CAK07571"/>
    <property type="gene ID" value="RL2079"/>
</dbReference>
<dbReference type="KEGG" id="rle:RL2079"/>
<dbReference type="eggNOG" id="COG3811">
    <property type="taxonomic scope" value="Bacteria"/>
</dbReference>
<dbReference type="HOGENOM" id="CLU_164736_0_0_5"/>
<dbReference type="Proteomes" id="UP000006575">
    <property type="component" value="Chromosome"/>
</dbReference>
<dbReference type="HAMAP" id="MF_00827">
    <property type="entry name" value="UPF0386"/>
    <property type="match status" value="1"/>
</dbReference>
<dbReference type="InterPro" id="IPR018654">
    <property type="entry name" value="YjhX_toxin"/>
</dbReference>
<dbReference type="NCBIfam" id="NF010240">
    <property type="entry name" value="PRK13687.1"/>
    <property type="match status" value="1"/>
</dbReference>
<dbReference type="Pfam" id="PF09857">
    <property type="entry name" value="YjhX_toxin"/>
    <property type="match status" value="1"/>
</dbReference>